<organism>
    <name type="scientific">Mus musculus</name>
    <name type="common">Mouse</name>
    <dbReference type="NCBI Taxonomy" id="10090"/>
    <lineage>
        <taxon>Eukaryota</taxon>
        <taxon>Metazoa</taxon>
        <taxon>Chordata</taxon>
        <taxon>Craniata</taxon>
        <taxon>Vertebrata</taxon>
        <taxon>Euteleostomi</taxon>
        <taxon>Mammalia</taxon>
        <taxon>Eutheria</taxon>
        <taxon>Euarchontoglires</taxon>
        <taxon>Glires</taxon>
        <taxon>Rodentia</taxon>
        <taxon>Myomorpha</taxon>
        <taxon>Muroidea</taxon>
        <taxon>Muridae</taxon>
        <taxon>Murinae</taxon>
        <taxon>Mus</taxon>
        <taxon>Mus</taxon>
    </lineage>
</organism>
<sequence length="491" mass="54459">MADPSLNDNPTACPHCASSQAGLLCVCPAGKSPVLVVEMSQTSSIGSTEFFASQERKKERNTSRESSLKDLSIRTSNVERKPQAQWSRSNVTVGKIPHIRMDDGAGIEEFYTFGRILGQGSFGMVFEAIDKETGAKWAIKKVNKEKAGSSAMKLLEREVSILKTVNHQHIIHLEQVFESPQKMYLVMELCEDGELKAVMDQRGHFSENETRLIIQSLASAIAYLHNKDIVHRDLKLENIMVKSSFIDDNNEMNLNIKVTDFGLSVQKHGSRSEGMMQTTCGTPIYMAPEVINAHDYSQQCDIWSIGVIMFILLCGEPPFLANSEEKLYELIKKGELRFENPVWESVSDSAKNTLKQLMKVDPAHRITAKELLDNQWLTGNTLSSARPTNVLEMMKEWKNNPESDEETNTDEETEQSAVYSPSANTAKQPTNAAKKPAAESVGMTSSNSSSSKLLSAESKAEPEKSSETVGHASVAKTTLKSTTLFRGKKRL</sequence>
<accession>Q924X7</accession>
<accession>Q4A1D4</accession>
<proteinExistence type="evidence at protein level"/>
<protein>
    <recommendedName>
        <fullName evidence="11">Serine/threonine-protein kinase 33</fullName>
        <ecNumber evidence="8">2.7.11.1</ecNumber>
    </recommendedName>
</protein>
<comment type="function">
    <text evidence="6 7 8 9">Serine/threonine protein kinase required for spermatid differentiation and male fertility (PubMed:29155043, PubMed:37146716, PubMed:38781365). Promotes sperm flagella assembly during spermatogenesis by mediating phosphorylation of fibrous sheath proteins AKAP3 and AKAP4 (PubMed:37146716). Also phosphorylates vimentin/VIM, thereby regulating the dynamic behavior of the intermediate filament cytoskeleton (PubMed:18811945).</text>
</comment>
<comment type="catalytic activity">
    <reaction evidence="8 9">
        <text>L-seryl-[protein] + ATP = O-phospho-L-seryl-[protein] + ADP + H(+)</text>
        <dbReference type="Rhea" id="RHEA:17989"/>
        <dbReference type="Rhea" id="RHEA-COMP:9863"/>
        <dbReference type="Rhea" id="RHEA-COMP:11604"/>
        <dbReference type="ChEBI" id="CHEBI:15378"/>
        <dbReference type="ChEBI" id="CHEBI:29999"/>
        <dbReference type="ChEBI" id="CHEBI:30616"/>
        <dbReference type="ChEBI" id="CHEBI:83421"/>
        <dbReference type="ChEBI" id="CHEBI:456216"/>
        <dbReference type="EC" id="2.7.11.1"/>
    </reaction>
    <physiologicalReaction direction="left-to-right" evidence="8 9">
        <dbReference type="Rhea" id="RHEA:17990"/>
    </physiologicalReaction>
</comment>
<comment type="catalytic activity">
    <reaction evidence="8 9">
        <text>L-threonyl-[protein] + ATP = O-phospho-L-threonyl-[protein] + ADP + H(+)</text>
        <dbReference type="Rhea" id="RHEA:46608"/>
        <dbReference type="Rhea" id="RHEA-COMP:11060"/>
        <dbReference type="Rhea" id="RHEA-COMP:11605"/>
        <dbReference type="ChEBI" id="CHEBI:15378"/>
        <dbReference type="ChEBI" id="CHEBI:30013"/>
        <dbReference type="ChEBI" id="CHEBI:30616"/>
        <dbReference type="ChEBI" id="CHEBI:61977"/>
        <dbReference type="ChEBI" id="CHEBI:456216"/>
        <dbReference type="EC" id="2.7.11.1"/>
    </reaction>
    <physiologicalReaction direction="left-to-right" evidence="8 9">
        <dbReference type="Rhea" id="RHEA:46609"/>
    </physiologicalReaction>
</comment>
<comment type="activity regulation">
    <text evidence="9">Specifically inhibited by CDD-2807 ((3-([1,1'-Biphenyl]-2-ylethynyl)-1H-indazol-5-yl)(2,6-diazaspiro[3.5]nonan-2-yl)methanone) (PubMed:38781365). CDD-2807 is a potential male contraceptive drug: it is not toxic, efficiently crosses the blood-testis barrier and induces a reversible contraceptive effect in male mice (PubMed:38781365).</text>
</comment>
<comment type="subunit">
    <text evidence="1">Homodimer.</text>
</comment>
<comment type="subcellular location">
    <subcellularLocation>
        <location evidence="7">Cytoplasm</location>
    </subcellularLocation>
    <subcellularLocation>
        <location evidence="7">Cytoplasm</location>
        <location evidence="7">Cytoskeleton</location>
    </subcellularLocation>
    <subcellularLocation>
        <location evidence="5">Cytoplasm</location>
        <location evidence="5">Perinuclear region</location>
    </subcellularLocation>
    <text evidence="7">Colocalizes with the caudal end of the manchette, a transient structure that guides tail elongation in elongating spermatids.</text>
</comment>
<comment type="tissue specificity">
    <text evidence="5 7">Highly expressed in testis, particularly in cells from the spermatogenic epithelia (PubMed:16176263, PubMed:29155043). Present in meiotic and post meiotic sperm cells (PubMed:29155043). Significant expression is detected in lung epithelia, alveolar macrophages, horizontal cells in the retina and in embryonic organs such as heart, brain and spinal cord (PubMed:16176263). Also expressed in pituitary gland, kidney, pancreas, trachea and thyroid gland (PubMed:16176263).</text>
</comment>
<comment type="developmental stage">
    <text evidence="7">Expression is initiated during meiosis I in primary spermatocytes during the pachytene period and is maintained during spermatogenesis.</text>
</comment>
<comment type="PTM">
    <text evidence="6">Autophosphorylated.</text>
</comment>
<comment type="disruption phenotype">
    <text evidence="7">Male mice are sterile due to severely malformed and immotile spermatozoa, characterized by disordered structural tail elements (PubMed:29155043). Conditional deletion in germ cells lead to male sterility, due to teratozoospermia and sperm immotility (PubMed:29155043).</text>
</comment>
<comment type="miscellaneous">
    <text evidence="9">STK33 might be used as a target for male contraception: administration of CDD-2807 selective inhibitor causes production of abnormal sperm with reduced motility, inducing a reversible contraceptive effect.</text>
</comment>
<comment type="similarity">
    <text evidence="11">Belongs to the protein kinase superfamily. CAMK Ser/Thr protein kinase family. CaMK subfamily.</text>
</comment>
<feature type="chain" id="PRO_0000278477" description="Serine/threonine-protein kinase 33">
    <location>
        <begin position="1"/>
        <end position="491"/>
    </location>
</feature>
<feature type="domain" description="Protein kinase" evidence="2">
    <location>
        <begin position="111"/>
        <end position="377"/>
    </location>
</feature>
<feature type="region of interest" description="Disordered" evidence="4">
    <location>
        <begin position="51"/>
        <end position="89"/>
    </location>
</feature>
<feature type="region of interest" description="Disordered" evidence="4">
    <location>
        <begin position="398"/>
        <end position="491"/>
    </location>
</feature>
<feature type="compositionally biased region" description="Basic and acidic residues" evidence="4">
    <location>
        <begin position="54"/>
        <end position="82"/>
    </location>
</feature>
<feature type="compositionally biased region" description="Acidic residues" evidence="4">
    <location>
        <begin position="402"/>
        <end position="414"/>
    </location>
</feature>
<feature type="compositionally biased region" description="Polar residues" evidence="4">
    <location>
        <begin position="415"/>
        <end position="431"/>
    </location>
</feature>
<feature type="compositionally biased region" description="Low complexity" evidence="4">
    <location>
        <begin position="445"/>
        <end position="457"/>
    </location>
</feature>
<feature type="compositionally biased region" description="Polar residues" evidence="4">
    <location>
        <begin position="475"/>
        <end position="484"/>
    </location>
</feature>
<feature type="active site" description="Proton acceptor" evidence="2 3">
    <location>
        <position position="233"/>
    </location>
</feature>
<feature type="binding site" evidence="2">
    <location>
        <begin position="117"/>
        <end position="125"/>
    </location>
    <ligand>
        <name>ATP</name>
        <dbReference type="ChEBI" id="CHEBI:30616"/>
    </ligand>
</feature>
<feature type="binding site" evidence="2">
    <location>
        <position position="140"/>
    </location>
    <ligand>
        <name>ATP</name>
        <dbReference type="ChEBI" id="CHEBI:30616"/>
    </ligand>
</feature>
<feature type="modified residue" description="Phosphoserine" evidence="12">
    <location>
        <position position="403"/>
    </location>
</feature>
<feature type="mutagenesis site" description="Abolished serine/threonine protein kinase activity." evidence="8">
    <original>K</original>
    <variation>M</variation>
    <location>
        <position position="140"/>
    </location>
</feature>
<feature type="mutagenesis site" description="Knockin mice show male subfertility with decreased count and motility of sperm." evidence="8">
    <location>
        <begin position="460"/>
        <end position="491"/>
    </location>
</feature>
<feature type="sequence conflict" description="In Ref. 1; AK014819." evidence="11" ref="1">
    <location>
        <position position="92"/>
    </location>
</feature>
<keyword id="KW-0067">ATP-binding</keyword>
<keyword id="KW-0963">Cytoplasm</keyword>
<keyword id="KW-0206">Cytoskeleton</keyword>
<keyword id="KW-0221">Differentiation</keyword>
<keyword id="KW-0418">Kinase</keyword>
<keyword id="KW-0547">Nucleotide-binding</keyword>
<keyword id="KW-0597">Phosphoprotein</keyword>
<keyword id="KW-1185">Reference proteome</keyword>
<keyword id="KW-0723">Serine/threonine-protein kinase</keyword>
<keyword id="KW-0744">Spermatogenesis</keyword>
<keyword id="KW-0808">Transferase</keyword>
<evidence type="ECO:0000250" key="1">
    <source>
        <dbReference type="UniProtKB" id="Q9BYT3"/>
    </source>
</evidence>
<evidence type="ECO:0000255" key="2">
    <source>
        <dbReference type="PROSITE-ProRule" id="PRU00159"/>
    </source>
</evidence>
<evidence type="ECO:0000255" key="3">
    <source>
        <dbReference type="PROSITE-ProRule" id="PRU10027"/>
    </source>
</evidence>
<evidence type="ECO:0000256" key="4">
    <source>
        <dbReference type="SAM" id="MobiDB-lite"/>
    </source>
</evidence>
<evidence type="ECO:0000269" key="5">
    <source>
    </source>
</evidence>
<evidence type="ECO:0000269" key="6">
    <source>
    </source>
</evidence>
<evidence type="ECO:0000269" key="7">
    <source>
    </source>
</evidence>
<evidence type="ECO:0000269" key="8">
    <source>
    </source>
</evidence>
<evidence type="ECO:0000269" key="9">
    <source>
    </source>
</evidence>
<evidence type="ECO:0000303" key="10">
    <source>
    </source>
</evidence>
<evidence type="ECO:0000305" key="11"/>
<evidence type="ECO:0007744" key="12">
    <source>
    </source>
</evidence>
<reference key="1">
    <citation type="journal article" date="2005" name="Science">
        <title>The transcriptional landscape of the mammalian genome.</title>
        <authorList>
            <person name="Carninci P."/>
            <person name="Kasukawa T."/>
            <person name="Katayama S."/>
            <person name="Gough J."/>
            <person name="Frith M.C."/>
            <person name="Maeda N."/>
            <person name="Oyama R."/>
            <person name="Ravasi T."/>
            <person name="Lenhard B."/>
            <person name="Wells C."/>
            <person name="Kodzius R."/>
            <person name="Shimokawa K."/>
            <person name="Bajic V.B."/>
            <person name="Brenner S.E."/>
            <person name="Batalov S."/>
            <person name="Forrest A.R."/>
            <person name="Zavolan M."/>
            <person name="Davis M.J."/>
            <person name="Wilming L.G."/>
            <person name="Aidinis V."/>
            <person name="Allen J.E."/>
            <person name="Ambesi-Impiombato A."/>
            <person name="Apweiler R."/>
            <person name="Aturaliya R.N."/>
            <person name="Bailey T.L."/>
            <person name="Bansal M."/>
            <person name="Baxter L."/>
            <person name="Beisel K.W."/>
            <person name="Bersano T."/>
            <person name="Bono H."/>
            <person name="Chalk A.M."/>
            <person name="Chiu K.P."/>
            <person name="Choudhary V."/>
            <person name="Christoffels A."/>
            <person name="Clutterbuck D.R."/>
            <person name="Crowe M.L."/>
            <person name="Dalla E."/>
            <person name="Dalrymple B.P."/>
            <person name="de Bono B."/>
            <person name="Della Gatta G."/>
            <person name="di Bernardo D."/>
            <person name="Down T."/>
            <person name="Engstrom P."/>
            <person name="Fagiolini M."/>
            <person name="Faulkner G."/>
            <person name="Fletcher C.F."/>
            <person name="Fukushima T."/>
            <person name="Furuno M."/>
            <person name="Futaki S."/>
            <person name="Gariboldi M."/>
            <person name="Georgii-Hemming P."/>
            <person name="Gingeras T.R."/>
            <person name="Gojobori T."/>
            <person name="Green R.E."/>
            <person name="Gustincich S."/>
            <person name="Harbers M."/>
            <person name="Hayashi Y."/>
            <person name="Hensch T.K."/>
            <person name="Hirokawa N."/>
            <person name="Hill D."/>
            <person name="Huminiecki L."/>
            <person name="Iacono M."/>
            <person name="Ikeo K."/>
            <person name="Iwama A."/>
            <person name="Ishikawa T."/>
            <person name="Jakt M."/>
            <person name="Kanapin A."/>
            <person name="Katoh M."/>
            <person name="Kawasawa Y."/>
            <person name="Kelso J."/>
            <person name="Kitamura H."/>
            <person name="Kitano H."/>
            <person name="Kollias G."/>
            <person name="Krishnan S.P."/>
            <person name="Kruger A."/>
            <person name="Kummerfeld S.K."/>
            <person name="Kurochkin I.V."/>
            <person name="Lareau L.F."/>
            <person name="Lazarevic D."/>
            <person name="Lipovich L."/>
            <person name="Liu J."/>
            <person name="Liuni S."/>
            <person name="McWilliam S."/>
            <person name="Madan Babu M."/>
            <person name="Madera M."/>
            <person name="Marchionni L."/>
            <person name="Matsuda H."/>
            <person name="Matsuzawa S."/>
            <person name="Miki H."/>
            <person name="Mignone F."/>
            <person name="Miyake S."/>
            <person name="Morris K."/>
            <person name="Mottagui-Tabar S."/>
            <person name="Mulder N."/>
            <person name="Nakano N."/>
            <person name="Nakauchi H."/>
            <person name="Ng P."/>
            <person name="Nilsson R."/>
            <person name="Nishiguchi S."/>
            <person name="Nishikawa S."/>
            <person name="Nori F."/>
            <person name="Ohara O."/>
            <person name="Okazaki Y."/>
            <person name="Orlando V."/>
            <person name="Pang K.C."/>
            <person name="Pavan W.J."/>
            <person name="Pavesi G."/>
            <person name="Pesole G."/>
            <person name="Petrovsky N."/>
            <person name="Piazza S."/>
            <person name="Reed J."/>
            <person name="Reid J.F."/>
            <person name="Ring B.Z."/>
            <person name="Ringwald M."/>
            <person name="Rost B."/>
            <person name="Ruan Y."/>
            <person name="Salzberg S.L."/>
            <person name="Sandelin A."/>
            <person name="Schneider C."/>
            <person name="Schoenbach C."/>
            <person name="Sekiguchi K."/>
            <person name="Semple C.A."/>
            <person name="Seno S."/>
            <person name="Sessa L."/>
            <person name="Sheng Y."/>
            <person name="Shibata Y."/>
            <person name="Shimada H."/>
            <person name="Shimada K."/>
            <person name="Silva D."/>
            <person name="Sinclair B."/>
            <person name="Sperling S."/>
            <person name="Stupka E."/>
            <person name="Sugiura K."/>
            <person name="Sultana R."/>
            <person name="Takenaka Y."/>
            <person name="Taki K."/>
            <person name="Tammoja K."/>
            <person name="Tan S.L."/>
            <person name="Tang S."/>
            <person name="Taylor M.S."/>
            <person name="Tegner J."/>
            <person name="Teichmann S.A."/>
            <person name="Ueda H.R."/>
            <person name="van Nimwegen E."/>
            <person name="Verardo R."/>
            <person name="Wei C.L."/>
            <person name="Yagi K."/>
            <person name="Yamanishi H."/>
            <person name="Zabarovsky E."/>
            <person name="Zhu S."/>
            <person name="Zimmer A."/>
            <person name="Hide W."/>
            <person name="Bult C."/>
            <person name="Grimmond S.M."/>
            <person name="Teasdale R.D."/>
            <person name="Liu E.T."/>
            <person name="Brusic V."/>
            <person name="Quackenbush J."/>
            <person name="Wahlestedt C."/>
            <person name="Mattick J.S."/>
            <person name="Hume D.A."/>
            <person name="Kai C."/>
            <person name="Sasaki D."/>
            <person name="Tomaru Y."/>
            <person name="Fukuda S."/>
            <person name="Kanamori-Katayama M."/>
            <person name="Suzuki M."/>
            <person name="Aoki J."/>
            <person name="Arakawa T."/>
            <person name="Iida J."/>
            <person name="Imamura K."/>
            <person name="Itoh M."/>
            <person name="Kato T."/>
            <person name="Kawaji H."/>
            <person name="Kawagashira N."/>
            <person name="Kawashima T."/>
            <person name="Kojima M."/>
            <person name="Kondo S."/>
            <person name="Konno H."/>
            <person name="Nakano K."/>
            <person name="Ninomiya N."/>
            <person name="Nishio T."/>
            <person name="Okada M."/>
            <person name="Plessy C."/>
            <person name="Shibata K."/>
            <person name="Shiraki T."/>
            <person name="Suzuki S."/>
            <person name="Tagami M."/>
            <person name="Waki K."/>
            <person name="Watahiki A."/>
            <person name="Okamura-Oho Y."/>
            <person name="Suzuki H."/>
            <person name="Kawai J."/>
            <person name="Hayashizaki Y."/>
        </authorList>
    </citation>
    <scope>NUCLEOTIDE SEQUENCE [LARGE SCALE MRNA]</scope>
    <source>
        <strain>C57BL/6J</strain>
        <tissue>Testis</tissue>
    </source>
</reference>
<reference key="2">
    <citation type="journal article" date="2001" name="Cytogenet. Cell Genet.">
        <title>Comparative genomic sequencing reveals a strikingly similar architecture of a conserved syntenic region on human chromosome 11p15.3 (including gene ST5) and mouse chromosome 7.</title>
        <authorList>
            <person name="Amid C."/>
            <person name="Bahr A."/>
            <person name="Mujica A."/>
            <person name="Sampson N."/>
            <person name="Bikar S.E."/>
            <person name="Winterpacht A."/>
            <person name="Zabel B."/>
            <person name="Hankeln T."/>
            <person name="Schmidt E.R."/>
        </authorList>
    </citation>
    <scope>NUCLEOTIDE SEQUENCE [GENOMIC DNA] OF 1-378</scope>
</reference>
<reference key="3">
    <citation type="journal article" date="2001" name="Gene">
        <title>A novel serine/threonine kinase gene, STK33, on human chromosome 11p15.3.</title>
        <authorList>
            <person name="Mujica A.O."/>
            <person name="Hankeln T."/>
            <person name="Schmidt E.R."/>
        </authorList>
    </citation>
    <scope>NUCLEOTIDE SEQUENCE [GENOMIC DNA] OF 89-423</scope>
    <source>
        <strain>BALB/cJ</strain>
    </source>
</reference>
<reference key="4">
    <citation type="journal article" date="2005" name="FEBS J.">
        <title>Differential expression pattern of the novel serine/threonine kinase, STK33, in mice and men.</title>
        <authorList>
            <person name="Mujica A.O."/>
            <person name="Brauksiepe B."/>
            <person name="Saaler-Reinhardt S."/>
            <person name="Reuss S."/>
            <person name="Schmidt E.R."/>
        </authorList>
    </citation>
    <scope>TISSUE SPECIFICITY</scope>
    <scope>SUBCELLULAR LOCATION</scope>
</reference>
<reference key="5">
    <citation type="journal article" date="2008" name="BMC Biochem.">
        <title>The serine/threonine kinase Stk33 exhibits autophosphorylation and phosphorylates the intermediate filament protein Vimentin.</title>
        <authorList>
            <person name="Brauksiepe B."/>
            <person name="Mujica A.O."/>
            <person name="Herrmann H."/>
            <person name="Schmidt E.R."/>
        </authorList>
    </citation>
    <scope>FUNCTION</scope>
    <scope>AUTOPHOSPHORYLATION</scope>
</reference>
<reference key="6">
    <citation type="journal article" date="2010" name="Cell">
        <title>A tissue-specific atlas of mouse protein phosphorylation and expression.</title>
        <authorList>
            <person name="Huttlin E.L."/>
            <person name="Jedrychowski M.P."/>
            <person name="Elias J.E."/>
            <person name="Goswami T."/>
            <person name="Rad R."/>
            <person name="Beausoleil S.A."/>
            <person name="Villen J."/>
            <person name="Haas W."/>
            <person name="Sowa M.E."/>
            <person name="Gygi S.P."/>
        </authorList>
    </citation>
    <scope>PHOSPHORYLATION [LARGE SCALE ANALYSIS] AT SER-403</scope>
    <scope>IDENTIFICATION BY MASS SPECTROMETRY [LARGE SCALE ANALYSIS]</scope>
    <source>
        <tissue>Testis</tissue>
    </source>
</reference>
<reference key="7">
    <citation type="journal article" date="2018" name="Dev. Biol.">
        <title>Stk33 is required for spermatid differentiation and male fertility in mice.</title>
        <authorList>
            <person name="Martins L.R."/>
            <person name="Bung R.K."/>
            <person name="Koch S."/>
            <person name="Richter K."/>
            <person name="Schwarzmueller L."/>
            <person name="Terhardt D."/>
            <person name="Kurtulmus B."/>
            <person name="Niehrs C."/>
            <person name="Rouhi A."/>
            <person name="Lohmann I."/>
            <person name="Pereira G."/>
            <person name="Froehling S."/>
            <person name="Glimm H."/>
            <person name="Scholl C."/>
        </authorList>
    </citation>
    <scope>FUNCTION</scope>
    <scope>SUBCELLULAR LOCATION</scope>
    <scope>TISSUE SPECIFICITY</scope>
    <scope>DEVELOPMENTAL STAGE</scope>
    <scope>DISRUPTION PHENOTYPE</scope>
</reference>
<reference key="8">
    <citation type="journal article" date="2023" name="Mol. Cell. Proteomics">
        <title>STK33 phosphorylates fibrous sheath protein AKAP3/4 to regulate sperm flagella assembly in spermiogenesis.</title>
        <authorList>
            <person name="Yu W."/>
            <person name="Li Y."/>
            <person name="Chen H."/>
            <person name="Cui Y."/>
            <person name="Situ C."/>
            <person name="Yao L."/>
            <person name="Zhang X."/>
            <person name="Lu S."/>
            <person name="Liu L."/>
            <person name="Li L."/>
            <person name="Ren J."/>
            <person name="Guo Y."/>
            <person name="Huo Z."/>
            <person name="Chen Y."/>
            <person name="Li H."/>
            <person name="Jiang T."/>
            <person name="Gu Y."/>
            <person name="Wang C."/>
            <person name="Zhu T."/>
            <person name="Li Y."/>
            <person name="Hu Z."/>
            <person name="Guo X."/>
        </authorList>
    </citation>
    <scope>FUNCTION</scope>
    <scope>CATALYTIC ACTIVITY</scope>
    <scope>MUTAGENESIS OF LYS-140 AND 460-ALA--LEU-491</scope>
</reference>
<reference key="9">
    <citation type="journal article" date="2024" name="Science">
        <title>Reversible male contraception by targeted inhibition of serine/threonine kinase 33.</title>
        <authorList>
            <person name="Ku A.F."/>
            <person name="Sharma K.L."/>
            <person name="Ta H.M."/>
            <person name="Sutton C.M."/>
            <person name="Bohren K.M."/>
            <person name="Wang Y."/>
            <person name="Chamakuri S."/>
            <person name="Chen R."/>
            <person name="Hakenjos J.M."/>
            <person name="Jimmidi R."/>
            <person name="Kent K."/>
            <person name="Li F."/>
            <person name="Li J.Y."/>
            <person name="Ma L."/>
            <person name="Madasu C."/>
            <person name="Palaniappan M."/>
            <person name="Palmer S.S."/>
            <person name="Qin X."/>
            <person name="Robers M.B."/>
            <person name="Sankaran B."/>
            <person name="Tan Z."/>
            <person name="Vasquez Y.M."/>
            <person name="Wang J."/>
            <person name="Wilkinson J."/>
            <person name="Yu Z."/>
            <person name="Ye Q."/>
            <person name="Young D.W."/>
            <person name="Teng M."/>
            <person name="Kim C."/>
            <person name="Matzuk M.M."/>
        </authorList>
    </citation>
    <scope>FUNCTION</scope>
    <scope>CATALYTIC ACTIVITY</scope>
    <scope>ACTIVITY REGULATION</scope>
</reference>
<dbReference type="EC" id="2.7.11.1" evidence="8"/>
<dbReference type="EMBL" id="AK014819">
    <property type="status" value="NOT_ANNOTATED_CDS"/>
    <property type="molecule type" value="mRNA"/>
</dbReference>
<dbReference type="EMBL" id="AJ307671">
    <property type="protein sequence ID" value="CAC39171.1"/>
    <property type="molecule type" value="Genomic_DNA"/>
</dbReference>
<dbReference type="EMBL" id="AM056057">
    <property type="protein sequence ID" value="CAJ20841.1"/>
    <property type="molecule type" value="mRNA"/>
</dbReference>
<dbReference type="CCDS" id="CCDS52358.1"/>
<dbReference type="RefSeq" id="NP_473444.1">
    <property type="nucleotide sequence ID" value="NM_054103.1"/>
</dbReference>
<dbReference type="RefSeq" id="XP_006507287.1">
    <property type="nucleotide sequence ID" value="XM_006507224.2"/>
</dbReference>
<dbReference type="RefSeq" id="XP_006507288.1">
    <property type="nucleotide sequence ID" value="XM_006507225.4"/>
</dbReference>
<dbReference type="RefSeq" id="XP_006507289.1">
    <property type="nucleotide sequence ID" value="XM_006507226.4"/>
</dbReference>
<dbReference type="RefSeq" id="XP_011239951.1">
    <property type="nucleotide sequence ID" value="XM_011241649.3"/>
</dbReference>
<dbReference type="RefSeq" id="XP_011239952.1">
    <property type="nucleotide sequence ID" value="XM_011241650.3"/>
</dbReference>
<dbReference type="RefSeq" id="XP_011239954.1">
    <property type="nucleotide sequence ID" value="XM_011241652.2"/>
</dbReference>
<dbReference type="RefSeq" id="XP_017177428.1">
    <property type="nucleotide sequence ID" value="XM_017321939.1"/>
</dbReference>
<dbReference type="RefSeq" id="XP_017177429.1">
    <property type="nucleotide sequence ID" value="XM_017321940.1"/>
</dbReference>
<dbReference type="RefSeq" id="XP_017177430.1">
    <property type="nucleotide sequence ID" value="XM_017321941.1"/>
</dbReference>
<dbReference type="RefSeq" id="XP_036008474.1">
    <property type="nucleotide sequence ID" value="XM_036152581.1"/>
</dbReference>
<dbReference type="RefSeq" id="XP_036008475.1">
    <property type="nucleotide sequence ID" value="XM_036152582.1"/>
</dbReference>
<dbReference type="SMR" id="Q924X7"/>
<dbReference type="BioGRID" id="228210">
    <property type="interactions" value="1"/>
</dbReference>
<dbReference type="FunCoup" id="Q924X7">
    <property type="interactions" value="1142"/>
</dbReference>
<dbReference type="STRING" id="10090.ENSMUSP00000102356"/>
<dbReference type="GlyGen" id="Q924X7">
    <property type="glycosylation" value="1 site"/>
</dbReference>
<dbReference type="iPTMnet" id="Q924X7"/>
<dbReference type="PhosphoSitePlus" id="Q924X7"/>
<dbReference type="SwissPalm" id="Q924X7"/>
<dbReference type="PaxDb" id="10090-ENSMUSP00000102356"/>
<dbReference type="PeptideAtlas" id="Q924X7"/>
<dbReference type="ProteomicsDB" id="254762"/>
<dbReference type="Antibodypedia" id="11459">
    <property type="antibodies" value="446 antibodies from 35 providers"/>
</dbReference>
<dbReference type="DNASU" id="117229"/>
<dbReference type="Ensembl" id="ENSMUST00000090414.11">
    <property type="protein sequence ID" value="ENSMUSP00000087897.5"/>
    <property type="gene ID" value="ENSMUSG00000031027.16"/>
</dbReference>
<dbReference type="Ensembl" id="ENSMUST00000106745.9">
    <property type="protein sequence ID" value="ENSMUSP00000102356.3"/>
    <property type="gene ID" value="ENSMUSG00000031027.16"/>
</dbReference>
<dbReference type="Ensembl" id="ENSMUST00000121748.8">
    <property type="protein sequence ID" value="ENSMUSP00000112515.2"/>
    <property type="gene ID" value="ENSMUSG00000031027.16"/>
</dbReference>
<dbReference type="GeneID" id="117229"/>
<dbReference type="KEGG" id="mmu:117229"/>
<dbReference type="UCSC" id="uc009jdm.2">
    <property type="organism name" value="mouse"/>
</dbReference>
<dbReference type="AGR" id="MGI:2152419"/>
<dbReference type="CTD" id="65975"/>
<dbReference type="MGI" id="MGI:2152419">
    <property type="gene designation" value="Stk33"/>
</dbReference>
<dbReference type="VEuPathDB" id="HostDB:ENSMUSG00000031027"/>
<dbReference type="eggNOG" id="KOG0032">
    <property type="taxonomic scope" value="Eukaryota"/>
</dbReference>
<dbReference type="GeneTree" id="ENSGT00940000159050"/>
<dbReference type="InParanoid" id="Q924X7"/>
<dbReference type="OMA" id="TQPIWAT"/>
<dbReference type="OrthoDB" id="541276at2759"/>
<dbReference type="PhylomeDB" id="Q924X7"/>
<dbReference type="TreeFam" id="TF314166"/>
<dbReference type="BRENDA" id="2.7.11.1">
    <property type="organism ID" value="3474"/>
</dbReference>
<dbReference type="BioGRID-ORCS" id="117229">
    <property type="hits" value="3 hits in 80 CRISPR screens"/>
</dbReference>
<dbReference type="ChiTaRS" id="Stk33">
    <property type="organism name" value="mouse"/>
</dbReference>
<dbReference type="PRO" id="PR:Q924X7"/>
<dbReference type="Proteomes" id="UP000000589">
    <property type="component" value="Chromosome 7"/>
</dbReference>
<dbReference type="RNAct" id="Q924X7">
    <property type="molecule type" value="protein"/>
</dbReference>
<dbReference type="Bgee" id="ENSMUSG00000031027">
    <property type="expression patterns" value="Expressed in spermatid and 56 other cell types or tissues"/>
</dbReference>
<dbReference type="ExpressionAtlas" id="Q924X7">
    <property type="expression patterns" value="baseline and differential"/>
</dbReference>
<dbReference type="GO" id="GO:0002177">
    <property type="term" value="C:manchette"/>
    <property type="evidence" value="ECO:0000314"/>
    <property type="project" value="UniProtKB"/>
</dbReference>
<dbReference type="GO" id="GO:0048471">
    <property type="term" value="C:perinuclear region of cytoplasm"/>
    <property type="evidence" value="ECO:0007669"/>
    <property type="project" value="UniProtKB-SubCell"/>
</dbReference>
<dbReference type="GO" id="GO:0005524">
    <property type="term" value="F:ATP binding"/>
    <property type="evidence" value="ECO:0007669"/>
    <property type="project" value="UniProtKB-KW"/>
</dbReference>
<dbReference type="GO" id="GO:0106310">
    <property type="term" value="F:protein serine kinase activity"/>
    <property type="evidence" value="ECO:0007669"/>
    <property type="project" value="RHEA"/>
</dbReference>
<dbReference type="GO" id="GO:0004674">
    <property type="term" value="F:protein serine/threonine kinase activity"/>
    <property type="evidence" value="ECO:0000314"/>
    <property type="project" value="UniProtKB"/>
</dbReference>
<dbReference type="GO" id="GO:1905198">
    <property type="term" value="P:manchette assembly"/>
    <property type="evidence" value="ECO:0000315"/>
    <property type="project" value="UniProtKB"/>
</dbReference>
<dbReference type="GO" id="GO:0046777">
    <property type="term" value="P:protein autophosphorylation"/>
    <property type="evidence" value="ECO:0000314"/>
    <property type="project" value="UniProtKB"/>
</dbReference>
<dbReference type="GO" id="GO:0007283">
    <property type="term" value="P:spermatogenesis"/>
    <property type="evidence" value="ECO:0000315"/>
    <property type="project" value="UniProtKB"/>
</dbReference>
<dbReference type="FunFam" id="3.30.200.20:FF:000315">
    <property type="entry name" value="Calcium-dependent protein kinase 3"/>
    <property type="match status" value="1"/>
</dbReference>
<dbReference type="FunFam" id="1.10.510.10:FF:000557">
    <property type="entry name" value="Serine/threonine-protein kinase 33"/>
    <property type="match status" value="1"/>
</dbReference>
<dbReference type="Gene3D" id="1.10.510.10">
    <property type="entry name" value="Transferase(Phosphotransferase) domain 1"/>
    <property type="match status" value="1"/>
</dbReference>
<dbReference type="InterPro" id="IPR011009">
    <property type="entry name" value="Kinase-like_dom_sf"/>
</dbReference>
<dbReference type="InterPro" id="IPR000719">
    <property type="entry name" value="Prot_kinase_dom"/>
</dbReference>
<dbReference type="InterPro" id="IPR017441">
    <property type="entry name" value="Protein_kinase_ATP_BS"/>
</dbReference>
<dbReference type="InterPro" id="IPR008271">
    <property type="entry name" value="Ser/Thr_kinase_AS"/>
</dbReference>
<dbReference type="PANTHER" id="PTHR24347">
    <property type="entry name" value="SERINE/THREONINE-PROTEIN KINASE"/>
    <property type="match status" value="1"/>
</dbReference>
<dbReference type="Pfam" id="PF00069">
    <property type="entry name" value="Pkinase"/>
    <property type="match status" value="1"/>
</dbReference>
<dbReference type="SMART" id="SM00220">
    <property type="entry name" value="S_TKc"/>
    <property type="match status" value="1"/>
</dbReference>
<dbReference type="SUPFAM" id="SSF56112">
    <property type="entry name" value="Protein kinase-like (PK-like)"/>
    <property type="match status" value="1"/>
</dbReference>
<dbReference type="PROSITE" id="PS00107">
    <property type="entry name" value="PROTEIN_KINASE_ATP"/>
    <property type="match status" value="1"/>
</dbReference>
<dbReference type="PROSITE" id="PS50011">
    <property type="entry name" value="PROTEIN_KINASE_DOM"/>
    <property type="match status" value="1"/>
</dbReference>
<dbReference type="PROSITE" id="PS00108">
    <property type="entry name" value="PROTEIN_KINASE_ST"/>
    <property type="match status" value="1"/>
</dbReference>
<gene>
    <name evidence="10" type="primary">Stk33</name>
</gene>
<name>STK33_MOUSE</name>